<reference key="1">
    <citation type="journal article" date="2006" name="J. Bacteriol.">
        <title>Pathogenomic sequence analysis of Bacillus cereus and Bacillus thuringiensis isolates closely related to Bacillus anthracis.</title>
        <authorList>
            <person name="Han C.S."/>
            <person name="Xie G."/>
            <person name="Challacombe J.F."/>
            <person name="Altherr M.R."/>
            <person name="Bhotika S.S."/>
            <person name="Bruce D."/>
            <person name="Campbell C.S."/>
            <person name="Campbell M.L."/>
            <person name="Chen J."/>
            <person name="Chertkov O."/>
            <person name="Cleland C."/>
            <person name="Dimitrijevic M."/>
            <person name="Doggett N.A."/>
            <person name="Fawcett J.J."/>
            <person name="Glavina T."/>
            <person name="Goodwin L.A."/>
            <person name="Hill K.K."/>
            <person name="Hitchcock P."/>
            <person name="Jackson P.J."/>
            <person name="Keim P."/>
            <person name="Kewalramani A.R."/>
            <person name="Longmire J."/>
            <person name="Lucas S."/>
            <person name="Malfatti S."/>
            <person name="McMurry K."/>
            <person name="Meincke L.J."/>
            <person name="Misra M."/>
            <person name="Moseman B.L."/>
            <person name="Mundt M."/>
            <person name="Munk A.C."/>
            <person name="Okinaka R.T."/>
            <person name="Parson-Quintana B."/>
            <person name="Reilly L.P."/>
            <person name="Richardson P."/>
            <person name="Robinson D.L."/>
            <person name="Rubin E."/>
            <person name="Saunders E."/>
            <person name="Tapia R."/>
            <person name="Tesmer J.G."/>
            <person name="Thayer N."/>
            <person name="Thompson L.S."/>
            <person name="Tice H."/>
            <person name="Ticknor L.O."/>
            <person name="Wills P.L."/>
            <person name="Brettin T.S."/>
            <person name="Gilna P."/>
        </authorList>
    </citation>
    <scope>NUCLEOTIDE SEQUENCE [LARGE SCALE GENOMIC DNA]</scope>
    <source>
        <strain>ZK / E33L</strain>
    </source>
</reference>
<organism>
    <name type="scientific">Bacillus cereus (strain ZK / E33L)</name>
    <dbReference type="NCBI Taxonomy" id="288681"/>
    <lineage>
        <taxon>Bacteria</taxon>
        <taxon>Bacillati</taxon>
        <taxon>Bacillota</taxon>
        <taxon>Bacilli</taxon>
        <taxon>Bacillales</taxon>
        <taxon>Bacillaceae</taxon>
        <taxon>Bacillus</taxon>
        <taxon>Bacillus cereus group</taxon>
    </lineage>
</organism>
<evidence type="ECO:0000250" key="1"/>
<evidence type="ECO:0000305" key="2"/>
<keyword id="KW-0456">Lyase</keyword>
<keyword id="KW-0479">Metal-binding</keyword>
<accession>Q638R8</accession>
<protein>
    <recommendedName>
        <fullName>Putative 4-hydroxy-4-methyl-2-oxoglutarate aldolase</fullName>
        <shortName>HMG aldolase</shortName>
        <ecNumber>4.1.3.17</ecNumber>
    </recommendedName>
    <alternativeName>
        <fullName>Oxaloacetate decarboxylase</fullName>
        <shortName>OAA decarboxylase</shortName>
        <ecNumber>4.1.1.112</ecNumber>
    </alternativeName>
    <alternativeName>
        <fullName>Regulator of ribonuclease activity homolog</fullName>
    </alternativeName>
    <alternativeName>
        <fullName>RraA-like protein</fullName>
    </alternativeName>
</protein>
<proteinExistence type="inferred from homology"/>
<gene>
    <name type="ordered locus">BCE33L3012</name>
</gene>
<comment type="function">
    <text evidence="1">Catalyzes the aldol cleavage of 4-hydroxy-4-methyl-2-oxoglutarate (HMG) into 2 molecules of pyruvate. Also contains a secondary oxaloacetate (OAA) decarboxylase activity due to the common pyruvate enolate transition state formed following C-C bond cleavage in the retro-aldol and decarboxylation reactions (By similarity).</text>
</comment>
<comment type="catalytic activity">
    <reaction>
        <text>4-hydroxy-4-methyl-2-oxoglutarate = 2 pyruvate</text>
        <dbReference type="Rhea" id="RHEA:22748"/>
        <dbReference type="ChEBI" id="CHEBI:15361"/>
        <dbReference type="ChEBI" id="CHEBI:58276"/>
        <dbReference type="EC" id="4.1.3.17"/>
    </reaction>
</comment>
<comment type="catalytic activity">
    <reaction>
        <text>oxaloacetate + H(+) = pyruvate + CO2</text>
        <dbReference type="Rhea" id="RHEA:15641"/>
        <dbReference type="ChEBI" id="CHEBI:15361"/>
        <dbReference type="ChEBI" id="CHEBI:15378"/>
        <dbReference type="ChEBI" id="CHEBI:16452"/>
        <dbReference type="ChEBI" id="CHEBI:16526"/>
        <dbReference type="EC" id="4.1.1.112"/>
    </reaction>
</comment>
<comment type="cofactor">
    <cofactor evidence="1">
        <name>a divalent metal cation</name>
        <dbReference type="ChEBI" id="CHEBI:60240"/>
    </cofactor>
    <text evidence="1">Divalent metal cation.</text>
</comment>
<comment type="subunit">
    <text evidence="1">Homotrimer.</text>
</comment>
<comment type="similarity">
    <text evidence="2">Belongs to the class II aldolase/RraA-like family.</text>
</comment>
<sequence>MWKTTDLCDEFENELQICRQSFRSFGKKEQFHGKIATVKVKDDNVLVKEGLQTLPEGTVLVVDGGASTNCALLGDNLAAIAEERKLAGIIVNGYVRDSSELKNINIGILALGTMPNRSVKEGKGDRNISLQFGGVEWKPNDYVYVDEDGVIISEKSLYR</sequence>
<dbReference type="EC" id="4.1.3.17"/>
<dbReference type="EC" id="4.1.1.112"/>
<dbReference type="EMBL" id="CP000001">
    <property type="protein sequence ID" value="AAU17248.1"/>
    <property type="molecule type" value="Genomic_DNA"/>
</dbReference>
<dbReference type="RefSeq" id="WP_000266058.1">
    <property type="nucleotide sequence ID" value="NC_006274.1"/>
</dbReference>
<dbReference type="SMR" id="Q638R8"/>
<dbReference type="KEGG" id="bcz:BCE33L3012"/>
<dbReference type="PATRIC" id="fig|288681.22.peg.2435"/>
<dbReference type="Proteomes" id="UP000002612">
    <property type="component" value="Chromosome"/>
</dbReference>
<dbReference type="GO" id="GO:0047443">
    <property type="term" value="F:4-hydroxy-4-methyl-2-oxoglutarate aldolase activity"/>
    <property type="evidence" value="ECO:0007669"/>
    <property type="project" value="UniProtKB-EC"/>
</dbReference>
<dbReference type="GO" id="GO:0046872">
    <property type="term" value="F:metal ion binding"/>
    <property type="evidence" value="ECO:0007669"/>
    <property type="project" value="UniProtKB-KW"/>
</dbReference>
<dbReference type="GO" id="GO:0008948">
    <property type="term" value="F:oxaloacetate decarboxylase activity"/>
    <property type="evidence" value="ECO:0007669"/>
    <property type="project" value="UniProtKB-EC"/>
</dbReference>
<dbReference type="GO" id="GO:0008428">
    <property type="term" value="F:ribonuclease inhibitor activity"/>
    <property type="evidence" value="ECO:0007669"/>
    <property type="project" value="InterPro"/>
</dbReference>
<dbReference type="GO" id="GO:0051252">
    <property type="term" value="P:regulation of RNA metabolic process"/>
    <property type="evidence" value="ECO:0007669"/>
    <property type="project" value="InterPro"/>
</dbReference>
<dbReference type="CDD" id="cd16841">
    <property type="entry name" value="RraA_family"/>
    <property type="match status" value="1"/>
</dbReference>
<dbReference type="Gene3D" id="3.50.30.40">
    <property type="entry name" value="Ribonuclease E inhibitor RraA/RraA-like"/>
    <property type="match status" value="1"/>
</dbReference>
<dbReference type="InterPro" id="IPR010203">
    <property type="entry name" value="RraA"/>
</dbReference>
<dbReference type="InterPro" id="IPR005493">
    <property type="entry name" value="RraA/RraA-like"/>
</dbReference>
<dbReference type="InterPro" id="IPR036704">
    <property type="entry name" value="RraA/RraA-like_sf"/>
</dbReference>
<dbReference type="NCBIfam" id="TIGR01935">
    <property type="entry name" value="NOT-MenG"/>
    <property type="match status" value="1"/>
</dbReference>
<dbReference type="NCBIfam" id="NF006875">
    <property type="entry name" value="PRK09372.1"/>
    <property type="match status" value="1"/>
</dbReference>
<dbReference type="PANTHER" id="PTHR33254">
    <property type="entry name" value="4-HYDROXY-4-METHYL-2-OXOGLUTARATE ALDOLASE 3-RELATED"/>
    <property type="match status" value="1"/>
</dbReference>
<dbReference type="PANTHER" id="PTHR33254:SF4">
    <property type="entry name" value="4-HYDROXY-4-METHYL-2-OXOGLUTARATE ALDOLASE 3-RELATED"/>
    <property type="match status" value="1"/>
</dbReference>
<dbReference type="Pfam" id="PF03737">
    <property type="entry name" value="RraA-like"/>
    <property type="match status" value="1"/>
</dbReference>
<dbReference type="SUPFAM" id="SSF89562">
    <property type="entry name" value="RraA-like"/>
    <property type="match status" value="1"/>
</dbReference>
<feature type="chain" id="PRO_0000209604" description="Putative 4-hydroxy-4-methyl-2-oxoglutarate aldolase">
    <location>
        <begin position="1"/>
        <end position="159"/>
    </location>
</feature>
<feature type="binding site" evidence="1">
    <location>
        <begin position="74"/>
        <end position="77"/>
    </location>
    <ligand>
        <name>substrate</name>
    </ligand>
</feature>
<feature type="binding site" evidence="1">
    <location>
        <position position="96"/>
    </location>
    <ligand>
        <name>substrate</name>
    </ligand>
</feature>
<feature type="binding site" evidence="1">
    <location>
        <position position="97"/>
    </location>
    <ligand>
        <name>a divalent metal cation</name>
        <dbReference type="ChEBI" id="CHEBI:60240"/>
    </ligand>
</feature>
<name>RRAAH_BACCZ</name>